<sequence length="461" mass="50932">MGTIHLFRKPQRSFFGKLLQEFRLVAADRRSWKILLFGAINLTCTGFLLMWCSSTNSIALTAYTYLTIFDLFSLITCLVSYWVMMRKPSPAYSFGFERLEVLAVFASTVLAQLGALFILKESAERFLEQPEIHTGRLLVGTFVALSFNLFTMLSIRNKPFAYVSEAASTSWLQEHVADLSRSLCGIIPGLSSIFLPRMNPFVLIDLAGAFALCITYMLIEINNYFAVDTASAIAIALMTFGTMYPMSVYSGKVLLQTTPPHVIGQLDKLIREVSTLDGVLEVRNEHFWTLGFGSLAGSVHVRIRRDANEQMVLAHVTNRLYTLVSTLTVQIFKDDWIRPALLSGPVAANVLNFTDHHVIPMPPLKGTDDSNPVTSTPTKPSSPPPEFSFNTPGKNVSPVILLNTQTRPYGLGLNHGHAPYSSVLNQGLGVPGIGATQGFRTGFTNIPSRYGTNNRIGQPRP</sequence>
<accession>Q0VC54</accession>
<name>ZNT6_BOVIN</name>
<feature type="chain" id="PRO_0000312572" description="Zinc transporter 6">
    <location>
        <begin position="1"/>
        <end position="461"/>
    </location>
</feature>
<feature type="topological domain" description="Cytoplasmic" evidence="2">
    <location>
        <begin position="1"/>
        <end position="33"/>
    </location>
</feature>
<feature type="transmembrane region" description="Helical" evidence="2">
    <location>
        <begin position="34"/>
        <end position="54"/>
    </location>
</feature>
<feature type="topological domain" description="Extracellular" evidence="2">
    <location>
        <begin position="55"/>
        <end position="64"/>
    </location>
</feature>
<feature type="transmembrane region" description="Helical" evidence="2">
    <location>
        <begin position="65"/>
        <end position="85"/>
    </location>
</feature>
<feature type="topological domain" description="Cytoplasmic" evidence="2">
    <location>
        <begin position="86"/>
        <end position="98"/>
    </location>
</feature>
<feature type="transmembrane region" description="Helical" evidence="2">
    <location>
        <begin position="99"/>
        <end position="119"/>
    </location>
</feature>
<feature type="topological domain" description="Extracellular" evidence="2">
    <location>
        <begin position="120"/>
        <end position="134"/>
    </location>
</feature>
<feature type="transmembrane region" description="Helical" evidence="2">
    <location>
        <begin position="135"/>
        <end position="155"/>
    </location>
</feature>
<feature type="topological domain" description="Cytoplasmic" evidence="2">
    <location>
        <begin position="156"/>
        <end position="200"/>
    </location>
</feature>
<feature type="transmembrane region" description="Helical" evidence="2">
    <location>
        <begin position="201"/>
        <end position="221"/>
    </location>
</feature>
<feature type="topological domain" description="Extracellular" evidence="2">
    <location>
        <begin position="222"/>
        <end position="223"/>
    </location>
</feature>
<feature type="transmembrane region" description="Helical" evidence="2">
    <location>
        <begin position="224"/>
        <end position="244"/>
    </location>
</feature>
<feature type="topological domain" description="Cytoplasmic" evidence="2">
    <location>
        <begin position="245"/>
        <end position="461"/>
    </location>
</feature>
<feature type="region of interest" description="Disordered" evidence="3">
    <location>
        <begin position="362"/>
        <end position="393"/>
    </location>
</feature>
<feature type="compositionally biased region" description="Low complexity" evidence="3">
    <location>
        <begin position="370"/>
        <end position="379"/>
    </location>
</feature>
<protein>
    <recommendedName>
        <fullName>Zinc transporter 6</fullName>
        <shortName>ZnT-6</shortName>
    </recommendedName>
    <alternativeName>
        <fullName>Solute carrier family 30 member 6</fullName>
    </alternativeName>
</protein>
<dbReference type="EMBL" id="BC120350">
    <property type="protein sequence ID" value="AAI20351.1"/>
    <property type="molecule type" value="mRNA"/>
</dbReference>
<dbReference type="RefSeq" id="NP_001069234.1">
    <property type="nucleotide sequence ID" value="NM_001075766.1"/>
</dbReference>
<dbReference type="SMR" id="Q0VC54"/>
<dbReference type="FunCoup" id="Q0VC54">
    <property type="interactions" value="2431"/>
</dbReference>
<dbReference type="STRING" id="9913.ENSBTAP00000014475"/>
<dbReference type="PaxDb" id="9913-ENSBTAP00000014475"/>
<dbReference type="Ensembl" id="ENSBTAT00000014475.4">
    <property type="protein sequence ID" value="ENSBTAP00000014475.3"/>
    <property type="gene ID" value="ENSBTAG00000010898.5"/>
</dbReference>
<dbReference type="GeneID" id="518111"/>
<dbReference type="KEGG" id="bta:518111"/>
<dbReference type="CTD" id="55676"/>
<dbReference type="VEuPathDB" id="HostDB:ENSBTAG00000010898"/>
<dbReference type="VGNC" id="VGNC:34810">
    <property type="gene designation" value="SLC30A6"/>
</dbReference>
<dbReference type="eggNOG" id="KOG1484">
    <property type="taxonomic scope" value="Eukaryota"/>
</dbReference>
<dbReference type="GeneTree" id="ENSGT00940000159934"/>
<dbReference type="HOGENOM" id="CLU_034201_0_0_1"/>
<dbReference type="InParanoid" id="Q0VC54"/>
<dbReference type="OMA" id="NIVCTGF"/>
<dbReference type="OrthoDB" id="5382797at2759"/>
<dbReference type="TreeFam" id="TF313167"/>
<dbReference type="Proteomes" id="UP000009136">
    <property type="component" value="Chromosome 11"/>
</dbReference>
<dbReference type="Bgee" id="ENSBTAG00000010898">
    <property type="expression patterns" value="Expressed in spermatocyte and 106 other cell types or tissues"/>
</dbReference>
<dbReference type="GO" id="GO:0005794">
    <property type="term" value="C:Golgi apparatus"/>
    <property type="evidence" value="ECO:0000318"/>
    <property type="project" value="GO_Central"/>
</dbReference>
<dbReference type="GO" id="GO:0032588">
    <property type="term" value="C:trans-Golgi network membrane"/>
    <property type="evidence" value="ECO:0000250"/>
    <property type="project" value="UniProtKB"/>
</dbReference>
<dbReference type="GO" id="GO:0005385">
    <property type="term" value="F:zinc ion transmembrane transporter activity"/>
    <property type="evidence" value="ECO:0007669"/>
    <property type="project" value="Ensembl"/>
</dbReference>
<dbReference type="GO" id="GO:0071579">
    <property type="term" value="P:regulation of zinc ion transport"/>
    <property type="evidence" value="ECO:0007669"/>
    <property type="project" value="Ensembl"/>
</dbReference>
<dbReference type="GO" id="GO:1904257">
    <property type="term" value="P:zinc ion import into Golgi lumen"/>
    <property type="evidence" value="ECO:0000250"/>
    <property type="project" value="UniProtKB"/>
</dbReference>
<dbReference type="GO" id="GO:0006829">
    <property type="term" value="P:zinc ion transport"/>
    <property type="evidence" value="ECO:0000318"/>
    <property type="project" value="GO_Central"/>
</dbReference>
<dbReference type="FunFam" id="1.20.1510.10:FF:000009">
    <property type="entry name" value="zinc transporter 6 isoform X1"/>
    <property type="match status" value="1"/>
</dbReference>
<dbReference type="Gene3D" id="1.20.1510.10">
    <property type="entry name" value="Cation efflux protein transmembrane domain"/>
    <property type="match status" value="1"/>
</dbReference>
<dbReference type="InterPro" id="IPR002524">
    <property type="entry name" value="Cation_efflux"/>
</dbReference>
<dbReference type="InterPro" id="IPR027469">
    <property type="entry name" value="Cation_efflux_TMD_sf"/>
</dbReference>
<dbReference type="InterPro" id="IPR052005">
    <property type="entry name" value="CDF_SLC30A"/>
</dbReference>
<dbReference type="NCBIfam" id="TIGR01297">
    <property type="entry name" value="CDF"/>
    <property type="match status" value="1"/>
</dbReference>
<dbReference type="PANTHER" id="PTHR46531">
    <property type="entry name" value="ZINC TRANSPORTER 6"/>
    <property type="match status" value="1"/>
</dbReference>
<dbReference type="PANTHER" id="PTHR46531:SF1">
    <property type="entry name" value="ZINC TRANSPORTER 6"/>
    <property type="match status" value="1"/>
</dbReference>
<dbReference type="Pfam" id="PF01545">
    <property type="entry name" value="Cation_efflux"/>
    <property type="match status" value="1"/>
</dbReference>
<dbReference type="SUPFAM" id="SSF161111">
    <property type="entry name" value="Cation efflux protein transmembrane domain-like"/>
    <property type="match status" value="1"/>
</dbReference>
<comment type="function">
    <text evidence="1">Has probably no intrinsic transporter activity but together with SLC30A5 forms a functional zinc ion:proton antiporter heterodimer, mediating zinc entry into the lumen of organelles along the secretory pathway. As part of that zinc ion:proton antiporter, contributes to zinc ion homeostasis within the early secretory pathway and regulates the activation and folding of enzymes like alkaline phosphatases and enzymes involved in phosphatidylinositol glycan anchor biosynthesis.</text>
</comment>
<comment type="subunit">
    <text evidence="1">Heterodimer with SLC30A5; form a functional zinc ion transmembrane transporter.</text>
</comment>
<comment type="subcellular location">
    <subcellularLocation>
        <location evidence="1">Golgi apparatus</location>
        <location evidence="1">trans-Golgi network membrane</location>
        <topology evidence="2">Multi-pass membrane protein</topology>
    </subcellularLocation>
</comment>
<comment type="similarity">
    <text evidence="4">Belongs to the cation diffusion facilitator (CDF) transporter (TC 2.A.4) family. SLC30A subfamily.</text>
</comment>
<comment type="caution">
    <text evidence="1">Hydrophilic histidine residues that participate to zinc binding in transporters of the family are not conserved in SLC30A6.</text>
</comment>
<evidence type="ECO:0000250" key="1">
    <source>
        <dbReference type="UniProtKB" id="Q6NXT4"/>
    </source>
</evidence>
<evidence type="ECO:0000255" key="2"/>
<evidence type="ECO:0000256" key="3">
    <source>
        <dbReference type="SAM" id="MobiDB-lite"/>
    </source>
</evidence>
<evidence type="ECO:0000305" key="4"/>
<organism>
    <name type="scientific">Bos taurus</name>
    <name type="common">Bovine</name>
    <dbReference type="NCBI Taxonomy" id="9913"/>
    <lineage>
        <taxon>Eukaryota</taxon>
        <taxon>Metazoa</taxon>
        <taxon>Chordata</taxon>
        <taxon>Craniata</taxon>
        <taxon>Vertebrata</taxon>
        <taxon>Euteleostomi</taxon>
        <taxon>Mammalia</taxon>
        <taxon>Eutheria</taxon>
        <taxon>Laurasiatheria</taxon>
        <taxon>Artiodactyla</taxon>
        <taxon>Ruminantia</taxon>
        <taxon>Pecora</taxon>
        <taxon>Bovidae</taxon>
        <taxon>Bovinae</taxon>
        <taxon>Bos</taxon>
    </lineage>
</organism>
<gene>
    <name type="primary">SLC30A6</name>
    <name type="synonym">ZNT6</name>
</gene>
<keyword id="KW-0333">Golgi apparatus</keyword>
<keyword id="KW-0406">Ion transport</keyword>
<keyword id="KW-0472">Membrane</keyword>
<keyword id="KW-1185">Reference proteome</keyword>
<keyword id="KW-0812">Transmembrane</keyword>
<keyword id="KW-1133">Transmembrane helix</keyword>
<keyword id="KW-0813">Transport</keyword>
<keyword id="KW-0862">Zinc</keyword>
<keyword id="KW-0864">Zinc transport</keyword>
<reference key="1">
    <citation type="submission" date="2006-08" db="EMBL/GenBank/DDBJ databases">
        <authorList>
            <consortium name="NIH - Mammalian Gene Collection (MGC) project"/>
        </authorList>
    </citation>
    <scope>NUCLEOTIDE SEQUENCE [LARGE SCALE MRNA]</scope>
    <source>
        <strain>Hereford</strain>
        <tissue>Fetal skin</tissue>
    </source>
</reference>
<proteinExistence type="evidence at transcript level"/>